<name>NDHH_CALFG</name>
<protein>
    <recommendedName>
        <fullName evidence="1">NAD(P)H-quinone oxidoreductase subunit H, chloroplastic</fullName>
        <ecNumber evidence="1">7.1.1.-</ecNumber>
    </recommendedName>
    <alternativeName>
        <fullName>NAD(P)H dehydrogenase subunit H</fullName>
    </alternativeName>
    <alternativeName>
        <fullName evidence="1">NADH-plastoquinone oxidoreductase 49 kDa subunit</fullName>
    </alternativeName>
    <alternativeName>
        <fullName evidence="1">NADH-plastoquinone oxidoreductase subunit H</fullName>
    </alternativeName>
</protein>
<geneLocation type="chloroplast"/>
<sequence length="393" mass="45431">MNVPATRKDLMIVNMGPHHPSMHGVLRLIVTLDGEDVIDCEPVLGYLHRGMEKIAENRTIIQYLPYVTRWDYLATMFTEAITVNAPEQLGNIQVPKRASYIRVIMLELSRIASHLLWLGPFMADIGAQTPFFYIFRERELLYDLFEAATGMRMMHNYFRIGGVAADLPHGWIDKCLDFCDYFLTGVVEYQKLITRNPIFLERVEGVGIIGGEEAINWGLSGPMLRASGIQWDLRKVDHYECYDEFDWQVQWQKEGDSLARYLVRISEMTESIKILQQALEGIPGGPYENLEGRRFDRESDSEWNDFDYRFISKKPSPTFELSKQELYVRVEAPKGELGIFLIGDNSVFPWRWKIRPPGFINLQILPHLVKRMKLADIMTILGSIDIIMGEVDR</sequence>
<keyword id="KW-0150">Chloroplast</keyword>
<keyword id="KW-0472">Membrane</keyword>
<keyword id="KW-0520">NAD</keyword>
<keyword id="KW-0521">NADP</keyword>
<keyword id="KW-0934">Plastid</keyword>
<keyword id="KW-0618">Plastoquinone</keyword>
<keyword id="KW-0874">Quinone</keyword>
<keyword id="KW-0793">Thylakoid</keyword>
<keyword id="KW-1278">Translocase</keyword>
<keyword id="KW-0813">Transport</keyword>
<feature type="chain" id="PRO_0000357970" description="NAD(P)H-quinone oxidoreductase subunit H, chloroplastic">
    <location>
        <begin position="1"/>
        <end position="393"/>
    </location>
</feature>
<accession>Q7YJS8</accession>
<reference key="1">
    <citation type="journal article" date="2003" name="Plant Syst. Evol.">
        <title>The chloroplast genome of the 'basal' angiosperm Calycanthus fertilis -- structural and phylogenetic analyses.</title>
        <authorList>
            <person name="Goremykin V."/>
            <person name="Hirsch-Ernst K.I."/>
            <person name="Woelfl S."/>
            <person name="Hellwig F.H."/>
        </authorList>
    </citation>
    <scope>NUCLEOTIDE SEQUENCE [LARGE SCALE GENOMIC DNA]</scope>
</reference>
<evidence type="ECO:0000255" key="1">
    <source>
        <dbReference type="HAMAP-Rule" id="MF_01358"/>
    </source>
</evidence>
<comment type="function">
    <text evidence="1">NDH shuttles electrons from NAD(P)H:plastoquinone, via FMN and iron-sulfur (Fe-S) centers, to quinones in the photosynthetic chain and possibly in a chloroplast respiratory chain. The immediate electron acceptor for the enzyme in this species is believed to be plastoquinone. Couples the redox reaction to proton translocation, and thus conserves the redox energy in a proton gradient.</text>
</comment>
<comment type="catalytic activity">
    <reaction evidence="1">
        <text>a plastoquinone + NADH + (n+1) H(+)(in) = a plastoquinol + NAD(+) + n H(+)(out)</text>
        <dbReference type="Rhea" id="RHEA:42608"/>
        <dbReference type="Rhea" id="RHEA-COMP:9561"/>
        <dbReference type="Rhea" id="RHEA-COMP:9562"/>
        <dbReference type="ChEBI" id="CHEBI:15378"/>
        <dbReference type="ChEBI" id="CHEBI:17757"/>
        <dbReference type="ChEBI" id="CHEBI:57540"/>
        <dbReference type="ChEBI" id="CHEBI:57945"/>
        <dbReference type="ChEBI" id="CHEBI:62192"/>
    </reaction>
</comment>
<comment type="catalytic activity">
    <reaction evidence="1">
        <text>a plastoquinone + NADPH + (n+1) H(+)(in) = a plastoquinol + NADP(+) + n H(+)(out)</text>
        <dbReference type="Rhea" id="RHEA:42612"/>
        <dbReference type="Rhea" id="RHEA-COMP:9561"/>
        <dbReference type="Rhea" id="RHEA-COMP:9562"/>
        <dbReference type="ChEBI" id="CHEBI:15378"/>
        <dbReference type="ChEBI" id="CHEBI:17757"/>
        <dbReference type="ChEBI" id="CHEBI:57783"/>
        <dbReference type="ChEBI" id="CHEBI:58349"/>
        <dbReference type="ChEBI" id="CHEBI:62192"/>
    </reaction>
</comment>
<comment type="subunit">
    <text evidence="1">NDH is composed of at least 16 different subunits, 5 of which are encoded in the nucleus.</text>
</comment>
<comment type="subcellular location">
    <subcellularLocation>
        <location evidence="1">Plastid</location>
        <location evidence="1">Chloroplast thylakoid membrane</location>
        <topology evidence="1">Peripheral membrane protein</topology>
        <orientation evidence="1">Stromal side</orientation>
    </subcellularLocation>
</comment>
<comment type="similarity">
    <text evidence="1">Belongs to the complex I 49 kDa subunit family.</text>
</comment>
<organism>
    <name type="scientific">Calycanthus floridus var. glaucus</name>
    <name type="common">Eastern sweetshrub</name>
    <name type="synonym">Calycanthus fertilis var. ferax</name>
    <dbReference type="NCBI Taxonomy" id="212734"/>
    <lineage>
        <taxon>Eukaryota</taxon>
        <taxon>Viridiplantae</taxon>
        <taxon>Streptophyta</taxon>
        <taxon>Embryophyta</taxon>
        <taxon>Tracheophyta</taxon>
        <taxon>Spermatophyta</taxon>
        <taxon>Magnoliopsida</taxon>
        <taxon>Magnoliidae</taxon>
        <taxon>Laurales</taxon>
        <taxon>Calycanthaceae</taxon>
        <taxon>Calycanthus</taxon>
    </lineage>
</organism>
<proteinExistence type="inferred from homology"/>
<dbReference type="EC" id="7.1.1.-" evidence="1"/>
<dbReference type="EMBL" id="AJ428413">
    <property type="protein sequence ID" value="CAD28778.1"/>
    <property type="molecule type" value="Genomic_DNA"/>
</dbReference>
<dbReference type="RefSeq" id="NP_862811.1">
    <property type="nucleotide sequence ID" value="NC_004993.1"/>
</dbReference>
<dbReference type="SMR" id="Q7YJS8"/>
<dbReference type="GeneID" id="2597992"/>
<dbReference type="GO" id="GO:0009535">
    <property type="term" value="C:chloroplast thylakoid membrane"/>
    <property type="evidence" value="ECO:0007669"/>
    <property type="project" value="UniProtKB-SubCell"/>
</dbReference>
<dbReference type="GO" id="GO:0051287">
    <property type="term" value="F:NAD binding"/>
    <property type="evidence" value="ECO:0007669"/>
    <property type="project" value="InterPro"/>
</dbReference>
<dbReference type="GO" id="GO:0016655">
    <property type="term" value="F:oxidoreductase activity, acting on NAD(P)H, quinone or similar compound as acceptor"/>
    <property type="evidence" value="ECO:0007669"/>
    <property type="project" value="UniProtKB-UniRule"/>
</dbReference>
<dbReference type="GO" id="GO:0048038">
    <property type="term" value="F:quinone binding"/>
    <property type="evidence" value="ECO:0007669"/>
    <property type="project" value="UniProtKB-KW"/>
</dbReference>
<dbReference type="GO" id="GO:0019684">
    <property type="term" value="P:photosynthesis, light reaction"/>
    <property type="evidence" value="ECO:0007669"/>
    <property type="project" value="UniProtKB-UniRule"/>
</dbReference>
<dbReference type="FunFam" id="1.10.645.10:FF:000003">
    <property type="entry name" value="NAD(P)H-quinone oxidoreductase subunit H, chloroplastic"/>
    <property type="match status" value="1"/>
</dbReference>
<dbReference type="Gene3D" id="1.10.645.10">
    <property type="entry name" value="Cytochrome-c3 Hydrogenase, chain B"/>
    <property type="match status" value="1"/>
</dbReference>
<dbReference type="HAMAP" id="MF_01358">
    <property type="entry name" value="NDH1_NuoD"/>
    <property type="match status" value="1"/>
</dbReference>
<dbReference type="InterPro" id="IPR001135">
    <property type="entry name" value="NADH_Q_OxRdtase_suD"/>
</dbReference>
<dbReference type="InterPro" id="IPR014029">
    <property type="entry name" value="NADH_UbQ_OxRdtase_49kDa_CS"/>
</dbReference>
<dbReference type="InterPro" id="IPR022885">
    <property type="entry name" value="NDH1_su_D/H"/>
</dbReference>
<dbReference type="InterPro" id="IPR029014">
    <property type="entry name" value="NiFe-Hase_large"/>
</dbReference>
<dbReference type="NCBIfam" id="NF004739">
    <property type="entry name" value="PRK06075.1"/>
    <property type="match status" value="1"/>
</dbReference>
<dbReference type="NCBIfam" id="NF005649">
    <property type="entry name" value="PRK07415.1"/>
    <property type="match status" value="1"/>
</dbReference>
<dbReference type="PANTHER" id="PTHR11993:SF10">
    <property type="entry name" value="NADH DEHYDROGENASE [UBIQUINONE] IRON-SULFUR PROTEIN 2, MITOCHONDRIAL"/>
    <property type="match status" value="1"/>
</dbReference>
<dbReference type="PANTHER" id="PTHR11993">
    <property type="entry name" value="NADH-UBIQUINONE OXIDOREDUCTASE 49 KDA SUBUNIT"/>
    <property type="match status" value="1"/>
</dbReference>
<dbReference type="Pfam" id="PF00346">
    <property type="entry name" value="Complex1_49kDa"/>
    <property type="match status" value="1"/>
</dbReference>
<dbReference type="SUPFAM" id="SSF56762">
    <property type="entry name" value="HydB/Nqo4-like"/>
    <property type="match status" value="1"/>
</dbReference>
<dbReference type="PROSITE" id="PS00535">
    <property type="entry name" value="COMPLEX1_49K"/>
    <property type="match status" value="1"/>
</dbReference>
<gene>
    <name evidence="1" type="primary">ndhH</name>
</gene>